<feature type="chain" id="PRO_0000404292" description="Uncharacterized ORF3 protein">
    <location>
        <begin position="1"/>
        <end position="224"/>
    </location>
</feature>
<feature type="region of interest" description="Disordered" evidence="1">
    <location>
        <begin position="128"/>
        <end position="224"/>
    </location>
</feature>
<feature type="compositionally biased region" description="Polar residues" evidence="1">
    <location>
        <begin position="129"/>
        <end position="138"/>
    </location>
</feature>
<feature type="compositionally biased region" description="Basic residues" evidence="1">
    <location>
        <begin position="139"/>
        <end position="156"/>
    </location>
</feature>
<feature type="compositionally biased region" description="Basic and acidic residues" evidence="1">
    <location>
        <begin position="167"/>
        <end position="182"/>
    </location>
</feature>
<feature type="compositionally biased region" description="Low complexity" evidence="1">
    <location>
        <begin position="185"/>
        <end position="195"/>
    </location>
</feature>
<keyword id="KW-1185">Reference proteome</keyword>
<protein>
    <recommendedName>
        <fullName>Uncharacterized ORF3 protein</fullName>
    </recommendedName>
</protein>
<organism>
    <name type="scientific">Torque teno sus virus 1 (isolate Sd-TTV31)</name>
    <dbReference type="NCBI Taxonomy" id="766190"/>
    <lineage>
        <taxon>Viruses</taxon>
        <taxon>Viruses incertae sedis</taxon>
        <taxon>Anelloviridae</taxon>
        <taxon>Iotatorquevirus</taxon>
        <taxon>Iotatorquevirus suida1a</taxon>
    </lineage>
</organism>
<gene>
    <name type="ORF">ORF1</name>
</gene>
<name>ORF3_TTVI1</name>
<dbReference type="EMBL" id="AB076001">
    <property type="protein sequence ID" value="BAB90846.1"/>
    <property type="molecule type" value="Genomic_DNA"/>
</dbReference>
<dbReference type="RefSeq" id="YP_003587829.1">
    <property type="nucleotide sequence ID" value="NC_014070.1"/>
</dbReference>
<dbReference type="SMR" id="Q8QVM1"/>
<dbReference type="KEGG" id="vg:9086575"/>
<dbReference type="Proteomes" id="UP000007079">
    <property type="component" value="Segment"/>
</dbReference>
<dbReference type="InterPro" id="IPR004118">
    <property type="entry name" value="HEV_TT_vir_Orf2/Gyrovir_Vp2_N"/>
</dbReference>
<dbReference type="Pfam" id="PF02957">
    <property type="entry name" value="TT_ORF2-like"/>
    <property type="match status" value="1"/>
</dbReference>
<accession>Q8QVM1</accession>
<proteinExistence type="predicted"/>
<reference key="1">
    <citation type="journal article" date="2002" name="J. Gen. Virol.">
        <title>Genomic characterization of TT viruses (TTVs) in pigs, cats and dogs and their relatedness with species-specific TTVs in primates and tupaias.</title>
        <authorList>
            <person name="Okamoto H."/>
            <person name="Takahashi M."/>
            <person name="Nishizawa T."/>
            <person name="Tawara A."/>
            <person name="Fukai K."/>
            <person name="Muramatsu U."/>
            <person name="Naito Y."/>
            <person name="Yoshikawa A."/>
        </authorList>
    </citation>
    <scope>NUCLEOTIDE SEQUENCE [GENOMIC DNA]</scope>
</reference>
<evidence type="ECO:0000256" key="1">
    <source>
        <dbReference type="SAM" id="MobiDB-lite"/>
    </source>
</evidence>
<organismHost>
    <name type="scientific">Sus scrofa</name>
    <name type="common">Pig</name>
    <dbReference type="NCBI Taxonomy" id="9823"/>
</organismHost>
<sequence>MKEKDYWEEAWLTSCTSIHDHHCDCGSWRDHLWTLCALDDADLAAAADIIEREEADGGEDFGFVDGDPGDAGGSAACTSLPPESKIPALLTRPILSEWSEQLHTPNTPGKAESRPKLEIKVSPLPLSVPSVQLHQIPTRSRRSSKPRKPRKKRKERVRPVSRVPKALLREMDRLMTKQRDALPESESSSYFSSDSLTDPWTTSDDDFQSDPDPLTNKRKKRLQF</sequence>